<comment type="function">
    <text evidence="1">Catalyzes 2 different reactions between oxygen and the acireductone 1,2-dihydroxy-3-keto-5-methylthiopentene (DHK-MTPene) depending upon the metal bound in the active site. Fe-containing acireductone dioxygenase (Fe-ARD) produces formate and 2-keto-4-methylthiobutyrate (KMTB), the alpha-ketoacid precursor of methionine in the methionine recycle pathway. Ni-containing acireductone dioxygenase (Ni-ARD) produces methylthiopropionate, carbon monoxide and formate, and does not lie on the methionine recycle pathway.</text>
</comment>
<comment type="catalytic activity">
    <reaction evidence="1">
        <text>1,2-dihydroxy-5-(methylsulfanyl)pent-1-en-3-one + O2 = 3-(methylsulfanyl)propanoate + CO + formate + 2 H(+)</text>
        <dbReference type="Rhea" id="RHEA:14161"/>
        <dbReference type="ChEBI" id="CHEBI:15378"/>
        <dbReference type="ChEBI" id="CHEBI:15379"/>
        <dbReference type="ChEBI" id="CHEBI:15740"/>
        <dbReference type="ChEBI" id="CHEBI:17245"/>
        <dbReference type="ChEBI" id="CHEBI:49016"/>
        <dbReference type="ChEBI" id="CHEBI:49252"/>
        <dbReference type="EC" id="1.13.11.53"/>
    </reaction>
</comment>
<comment type="catalytic activity">
    <reaction evidence="1">
        <text>1,2-dihydroxy-5-(methylsulfanyl)pent-1-en-3-one + O2 = 4-methylsulfanyl-2-oxobutanoate + formate + 2 H(+)</text>
        <dbReference type="Rhea" id="RHEA:24504"/>
        <dbReference type="ChEBI" id="CHEBI:15378"/>
        <dbReference type="ChEBI" id="CHEBI:15379"/>
        <dbReference type="ChEBI" id="CHEBI:15740"/>
        <dbReference type="ChEBI" id="CHEBI:16723"/>
        <dbReference type="ChEBI" id="CHEBI:49252"/>
        <dbReference type="EC" id="1.13.11.54"/>
    </reaction>
</comment>
<comment type="cofactor">
    <cofactor evidence="1">
        <name>Fe(2+)</name>
        <dbReference type="ChEBI" id="CHEBI:29033"/>
    </cofactor>
    <text evidence="1">Binds 1 Fe(2+) cation per monomer.</text>
</comment>
<comment type="cofactor">
    <cofactor evidence="1">
        <name>Ni(2+)</name>
        <dbReference type="ChEBI" id="CHEBI:49786"/>
    </cofactor>
    <text evidence="1">Binds 1 nickel ion per monomer.</text>
</comment>
<comment type="pathway">
    <text evidence="1">Amino-acid biosynthesis; L-methionine biosynthesis via salvage pathway; L-methionine from S-methyl-5-thio-alpha-D-ribose 1-phosphate: step 5/6.</text>
</comment>
<comment type="subunit">
    <text evidence="1">Monomer.</text>
</comment>
<comment type="similarity">
    <text evidence="1">Belongs to the acireductone dioxygenase (ARD) family.</text>
</comment>
<gene>
    <name evidence="1" type="primary">mtnD</name>
    <name type="ordered locus">HY04AAS1_1513</name>
</gene>
<name>MTND_HYDS0</name>
<protein>
    <recommendedName>
        <fullName evidence="1">Acireductone dioxygenase</fullName>
    </recommendedName>
    <alternativeName>
        <fullName evidence="1">1,2-dihydroxy-3-keto-5-methylthiopentene dioxygenase</fullName>
        <shortName evidence="1">DHK-MTPene dioxygenase</shortName>
    </alternativeName>
    <alternativeName>
        <fullName evidence="1">Acireductone dioxygenase (Fe(2+)-requiring)</fullName>
        <shortName evidence="1">ARD'</shortName>
        <shortName evidence="1">Fe-ARD</shortName>
        <ecNumber evidence="1">1.13.11.54</ecNumber>
    </alternativeName>
    <alternativeName>
        <fullName evidence="1">Acireductone dioxygenase (Ni(2+)-requiring)</fullName>
        <shortName evidence="1">ARD</shortName>
        <shortName evidence="1">Ni-ARD</shortName>
        <ecNumber evidence="1">1.13.11.53</ecNumber>
    </alternativeName>
</protein>
<proteinExistence type="inferred from homology"/>
<accession>B4U606</accession>
<reference key="1">
    <citation type="journal article" date="2009" name="J. Bacteriol.">
        <title>Complete and draft genome sequences of six members of the Aquificales.</title>
        <authorList>
            <person name="Reysenbach A.-L."/>
            <person name="Hamamura N."/>
            <person name="Podar M."/>
            <person name="Griffiths E."/>
            <person name="Ferreira S."/>
            <person name="Hochstein R."/>
            <person name="Heidelberg J."/>
            <person name="Johnson J."/>
            <person name="Mead D."/>
            <person name="Pohorille A."/>
            <person name="Sarmiento M."/>
            <person name="Schweighofer K."/>
            <person name="Seshadri R."/>
            <person name="Voytek M.A."/>
        </authorList>
    </citation>
    <scope>NUCLEOTIDE SEQUENCE [LARGE SCALE GENOMIC DNA]</scope>
    <source>
        <strain>Y04AAS1</strain>
    </source>
</reference>
<dbReference type="EC" id="1.13.11.54" evidence="1"/>
<dbReference type="EC" id="1.13.11.53" evidence="1"/>
<dbReference type="EMBL" id="CP001130">
    <property type="protein sequence ID" value="ACG58196.1"/>
    <property type="molecule type" value="Genomic_DNA"/>
</dbReference>
<dbReference type="RefSeq" id="WP_012514552.1">
    <property type="nucleotide sequence ID" value="NC_011126.1"/>
</dbReference>
<dbReference type="SMR" id="B4U606"/>
<dbReference type="STRING" id="380749.HY04AAS1_1513"/>
<dbReference type="KEGG" id="hya:HY04AAS1_1513"/>
<dbReference type="eggNOG" id="COG1791">
    <property type="taxonomic scope" value="Bacteria"/>
</dbReference>
<dbReference type="HOGENOM" id="CLU_125400_0_0_0"/>
<dbReference type="OrthoDB" id="9795636at2"/>
<dbReference type="UniPathway" id="UPA00904">
    <property type="reaction ID" value="UER00878"/>
</dbReference>
<dbReference type="GO" id="GO:0010308">
    <property type="term" value="F:acireductone dioxygenase (Ni2+-requiring) activity"/>
    <property type="evidence" value="ECO:0007669"/>
    <property type="project" value="UniProtKB-UniRule"/>
</dbReference>
<dbReference type="GO" id="GO:0010309">
    <property type="term" value="F:acireductone dioxygenase [iron(II)-requiring] activity"/>
    <property type="evidence" value="ECO:0007669"/>
    <property type="project" value="UniProtKB-UniRule"/>
</dbReference>
<dbReference type="GO" id="GO:0005506">
    <property type="term" value="F:iron ion binding"/>
    <property type="evidence" value="ECO:0007669"/>
    <property type="project" value="UniProtKB-UniRule"/>
</dbReference>
<dbReference type="GO" id="GO:0016151">
    <property type="term" value="F:nickel cation binding"/>
    <property type="evidence" value="ECO:0007669"/>
    <property type="project" value="UniProtKB-UniRule"/>
</dbReference>
<dbReference type="GO" id="GO:0019509">
    <property type="term" value="P:L-methionine salvage from methylthioadenosine"/>
    <property type="evidence" value="ECO:0007669"/>
    <property type="project" value="UniProtKB-UniRule"/>
</dbReference>
<dbReference type="GO" id="GO:0019284">
    <property type="term" value="P:L-methionine salvage from S-adenosylmethionine"/>
    <property type="evidence" value="ECO:0007669"/>
    <property type="project" value="InterPro"/>
</dbReference>
<dbReference type="CDD" id="cd02232">
    <property type="entry name" value="cupin_ARD"/>
    <property type="match status" value="1"/>
</dbReference>
<dbReference type="Gene3D" id="2.60.120.10">
    <property type="entry name" value="Jelly Rolls"/>
    <property type="match status" value="1"/>
</dbReference>
<dbReference type="HAMAP" id="MF_01682">
    <property type="entry name" value="Salvage_MtnD"/>
    <property type="match status" value="1"/>
</dbReference>
<dbReference type="InterPro" id="IPR004313">
    <property type="entry name" value="ARD"/>
</dbReference>
<dbReference type="InterPro" id="IPR023956">
    <property type="entry name" value="ARD_bac"/>
</dbReference>
<dbReference type="InterPro" id="IPR014710">
    <property type="entry name" value="RmlC-like_jellyroll"/>
</dbReference>
<dbReference type="InterPro" id="IPR011051">
    <property type="entry name" value="RmlC_Cupin_sf"/>
</dbReference>
<dbReference type="PANTHER" id="PTHR23418">
    <property type="entry name" value="ACIREDUCTONE DIOXYGENASE"/>
    <property type="match status" value="1"/>
</dbReference>
<dbReference type="PANTHER" id="PTHR23418:SF0">
    <property type="entry name" value="ACIREDUCTONE DIOXYGENASE"/>
    <property type="match status" value="1"/>
</dbReference>
<dbReference type="Pfam" id="PF03079">
    <property type="entry name" value="ARD"/>
    <property type="match status" value="1"/>
</dbReference>
<dbReference type="SUPFAM" id="SSF51182">
    <property type="entry name" value="RmlC-like cupins"/>
    <property type="match status" value="1"/>
</dbReference>
<sequence length="183" mass="21164">MSHLVIYNEEGSVLELIKEYEAVSKRLAALGVRFERWKADNELSWDAGQKEVIKAYEEDINRIIKEFGFKSLDVVSLIPENPKKDELRNVFLKEHTHSDFEVRFFVDGSGTFYLHIDDKVYVAFCEKGDFISVPAYTKHWFDMGSKPFFKAIRFFLIPEGWVADFTGSDISLKIPSHDDIASL</sequence>
<evidence type="ECO:0000255" key="1">
    <source>
        <dbReference type="HAMAP-Rule" id="MF_01682"/>
    </source>
</evidence>
<feature type="chain" id="PRO_0000359199" description="Acireductone dioxygenase">
    <location>
        <begin position="1"/>
        <end position="183"/>
    </location>
</feature>
<feature type="binding site" evidence="1">
    <location>
        <position position="95"/>
    </location>
    <ligand>
        <name>Fe(2+)</name>
        <dbReference type="ChEBI" id="CHEBI:29033"/>
    </ligand>
</feature>
<feature type="binding site" evidence="1">
    <location>
        <position position="95"/>
    </location>
    <ligand>
        <name>Ni(2+)</name>
        <dbReference type="ChEBI" id="CHEBI:49786"/>
    </ligand>
</feature>
<feature type="binding site" evidence="1">
    <location>
        <position position="97"/>
    </location>
    <ligand>
        <name>Fe(2+)</name>
        <dbReference type="ChEBI" id="CHEBI:29033"/>
    </ligand>
</feature>
<feature type="binding site" evidence="1">
    <location>
        <position position="97"/>
    </location>
    <ligand>
        <name>Ni(2+)</name>
        <dbReference type="ChEBI" id="CHEBI:49786"/>
    </ligand>
</feature>
<feature type="binding site" evidence="1">
    <location>
        <position position="101"/>
    </location>
    <ligand>
        <name>Fe(2+)</name>
        <dbReference type="ChEBI" id="CHEBI:29033"/>
    </ligand>
</feature>
<feature type="binding site" evidence="1">
    <location>
        <position position="101"/>
    </location>
    <ligand>
        <name>Ni(2+)</name>
        <dbReference type="ChEBI" id="CHEBI:49786"/>
    </ligand>
</feature>
<feature type="binding site" evidence="1">
    <location>
        <position position="139"/>
    </location>
    <ligand>
        <name>Fe(2+)</name>
        <dbReference type="ChEBI" id="CHEBI:29033"/>
    </ligand>
</feature>
<feature type="binding site" evidence="1">
    <location>
        <position position="139"/>
    </location>
    <ligand>
        <name>Ni(2+)</name>
        <dbReference type="ChEBI" id="CHEBI:49786"/>
    </ligand>
</feature>
<feature type="site" description="May play a role in metal incorporation in vivo" evidence="1">
    <location>
        <position position="94"/>
    </location>
</feature>
<feature type="site" description="Important to generate the dianion" evidence="1">
    <location>
        <position position="103"/>
    </location>
</feature>
<keyword id="KW-0028">Amino-acid biosynthesis</keyword>
<keyword id="KW-0223">Dioxygenase</keyword>
<keyword id="KW-0408">Iron</keyword>
<keyword id="KW-0479">Metal-binding</keyword>
<keyword id="KW-0486">Methionine biosynthesis</keyword>
<keyword id="KW-0533">Nickel</keyword>
<keyword id="KW-0560">Oxidoreductase</keyword>
<organism>
    <name type="scientific">Hydrogenobaculum sp. (strain Y04AAS1)</name>
    <dbReference type="NCBI Taxonomy" id="380749"/>
    <lineage>
        <taxon>Bacteria</taxon>
        <taxon>Pseudomonadati</taxon>
        <taxon>Aquificota</taxon>
        <taxon>Aquificia</taxon>
        <taxon>Aquificales</taxon>
        <taxon>Aquificaceae</taxon>
        <taxon>Hydrogenobaculum</taxon>
    </lineage>
</organism>